<proteinExistence type="inferred from homology"/>
<accession>Q52377</accession>
<accession>Q4ZSE2</accession>
<comment type="function">
    <text evidence="1">The UvrABC repair system catalyzes the recognition and processing of DNA lesions. UvrC both incises the 5' and 3' sides of the lesion. The N-terminal half is responsible for the 3' incision and the C-terminal half is responsible for the 5' incision.</text>
</comment>
<comment type="subunit">
    <text evidence="1">Interacts with UvrB in an incision complex.</text>
</comment>
<comment type="subcellular location">
    <subcellularLocation>
        <location evidence="1">Cytoplasm</location>
    </subcellularLocation>
</comment>
<comment type="similarity">
    <text evidence="1">Belongs to the UvrC family.</text>
</comment>
<protein>
    <recommendedName>
        <fullName evidence="1">UvrABC system protein C</fullName>
        <shortName evidence="1">Protein UvrC</shortName>
    </recommendedName>
    <alternativeName>
        <fullName evidence="1">Excinuclease ABC subunit C</fullName>
    </alternativeName>
</protein>
<sequence>MTQTFDPGAFLATCSGRPGVYRMFDAEATLLYVGKAKNLKKRLASYFRKTGHAPKTGALVSRIAQIETTITGNETEALLLEQTLIKEWRPPYNILLRDDKSYPYVFLSDNAFPRLSIHRGTKKAKGRYFGPYPSAGAIRESLSLLQKTFQVRQCEDSYFKNRTRPCLQYQIKRCKGPCVGLVEPEVYAEDVRHSVMFLEGRSNALSDELNASMEKAAMALDFERAAELRDQVALLRRVQDQQSMDGGTGDVDVVAAFVNPGGACVHLISVRGGRVLGSKNFFPQVGIEEEVGEVMSAFLAQYFLGGIDRELPGEVIVNVINDDFPAFVDAVEELRGVEMVISHRVRGTRARWQQMAVTNAEQALTARLANRQHVASRFEALAKVLGLEDPPMRLECYDISHSSGEATVASCVVFGPEGPIKSDYRRFNIEGVTAGDDYAAMHQALTRRYSRIKAGEGKLPDVLLVDGGKGQMSMARDVLNELQVPELILLGVAKGTTRKAGFETLYLNDSAHEFTLPGDSPALHLIQQIRDEAHRFAITGHRARRGKTRRTSTLEGVAGVGPTRRRDLLKHFGGLQELSRASIDEIAKAPGISKKLAESIYANLHSE</sequence>
<reference key="1">
    <citation type="journal article" date="2005" name="Proc. Natl. Acad. Sci. U.S.A.">
        <title>Comparison of the complete genome sequences of Pseudomonas syringae pv. syringae B728a and pv. tomato DC3000.</title>
        <authorList>
            <person name="Feil H."/>
            <person name="Feil W.S."/>
            <person name="Chain P."/>
            <person name="Larimer F."/>
            <person name="Dibartolo G."/>
            <person name="Copeland A."/>
            <person name="Lykidis A."/>
            <person name="Trong S."/>
            <person name="Nolan M."/>
            <person name="Goltsman E."/>
            <person name="Thiel J."/>
            <person name="Malfatti S."/>
            <person name="Loper J.E."/>
            <person name="Lapidus A."/>
            <person name="Detter J.C."/>
            <person name="Land M."/>
            <person name="Richardson P.M."/>
            <person name="Kyrpides N.C."/>
            <person name="Ivanova N."/>
            <person name="Lindow S.E."/>
        </authorList>
    </citation>
    <scope>NUCLEOTIDE SEQUENCE [LARGE SCALE GENOMIC DNA]</scope>
    <source>
        <strain>B728a</strain>
    </source>
</reference>
<reference key="2">
    <citation type="journal article" date="1994" name="J. Bacteriol.">
        <title>Genetic evidence that the gacA gene encodes the cognate response regulator for the lemA sensor in Pseudomonas syringae.</title>
        <authorList>
            <person name="Rich J.J."/>
            <person name="Kinscherf T.G."/>
            <person name="Kitten T."/>
            <person name="Willis D.K."/>
        </authorList>
    </citation>
    <scope>NUCLEOTIDE SEQUENCE [GENOMIC DNA] OF 1-153</scope>
</reference>
<evidence type="ECO:0000255" key="1">
    <source>
        <dbReference type="HAMAP-Rule" id="MF_00203"/>
    </source>
</evidence>
<evidence type="ECO:0000305" key="2"/>
<name>UVRC_PSEU2</name>
<keyword id="KW-0963">Cytoplasm</keyword>
<keyword id="KW-0227">DNA damage</keyword>
<keyword id="KW-0228">DNA excision</keyword>
<keyword id="KW-0234">DNA repair</keyword>
<keyword id="KW-0267">Excision nuclease</keyword>
<keyword id="KW-0742">SOS response</keyword>
<dbReference type="EMBL" id="CP000075">
    <property type="protein sequence ID" value="AAY37930.1"/>
    <property type="molecule type" value="Genomic_DNA"/>
</dbReference>
<dbReference type="EMBL" id="U09767">
    <property type="protein sequence ID" value="AAA65232.1"/>
    <property type="molecule type" value="Genomic_DNA"/>
</dbReference>
<dbReference type="PIR" id="B55538">
    <property type="entry name" value="B55538"/>
</dbReference>
<dbReference type="RefSeq" id="WP_011268071.1">
    <property type="nucleotide sequence ID" value="NC_007005.1"/>
</dbReference>
<dbReference type="RefSeq" id="YP_235968.1">
    <property type="nucleotide sequence ID" value="NC_007005.1"/>
</dbReference>
<dbReference type="SMR" id="Q52377"/>
<dbReference type="STRING" id="205918.Psyr_2896"/>
<dbReference type="KEGG" id="psb:Psyr_2896"/>
<dbReference type="PATRIC" id="fig|205918.7.peg.2952"/>
<dbReference type="eggNOG" id="COG0322">
    <property type="taxonomic scope" value="Bacteria"/>
</dbReference>
<dbReference type="HOGENOM" id="CLU_014841_3_0_6"/>
<dbReference type="OrthoDB" id="9804933at2"/>
<dbReference type="Proteomes" id="UP000000426">
    <property type="component" value="Chromosome"/>
</dbReference>
<dbReference type="GO" id="GO:0005737">
    <property type="term" value="C:cytoplasm"/>
    <property type="evidence" value="ECO:0007669"/>
    <property type="project" value="UniProtKB-SubCell"/>
</dbReference>
<dbReference type="GO" id="GO:0009380">
    <property type="term" value="C:excinuclease repair complex"/>
    <property type="evidence" value="ECO:0007669"/>
    <property type="project" value="InterPro"/>
</dbReference>
<dbReference type="GO" id="GO:0003677">
    <property type="term" value="F:DNA binding"/>
    <property type="evidence" value="ECO:0007669"/>
    <property type="project" value="UniProtKB-UniRule"/>
</dbReference>
<dbReference type="GO" id="GO:0009381">
    <property type="term" value="F:excinuclease ABC activity"/>
    <property type="evidence" value="ECO:0007669"/>
    <property type="project" value="UniProtKB-UniRule"/>
</dbReference>
<dbReference type="GO" id="GO:0006289">
    <property type="term" value="P:nucleotide-excision repair"/>
    <property type="evidence" value="ECO:0007669"/>
    <property type="project" value="UniProtKB-UniRule"/>
</dbReference>
<dbReference type="GO" id="GO:0009432">
    <property type="term" value="P:SOS response"/>
    <property type="evidence" value="ECO:0007669"/>
    <property type="project" value="UniProtKB-UniRule"/>
</dbReference>
<dbReference type="CDD" id="cd10434">
    <property type="entry name" value="GIY-YIG_UvrC_Cho"/>
    <property type="match status" value="1"/>
</dbReference>
<dbReference type="FunFam" id="1.10.150.20:FF:000005">
    <property type="entry name" value="UvrABC system protein C"/>
    <property type="match status" value="1"/>
</dbReference>
<dbReference type="FunFam" id="3.30.420.340:FF:000001">
    <property type="entry name" value="UvrABC system protein C"/>
    <property type="match status" value="1"/>
</dbReference>
<dbReference type="FunFam" id="3.40.1440.10:FF:000001">
    <property type="entry name" value="UvrABC system protein C"/>
    <property type="match status" value="1"/>
</dbReference>
<dbReference type="Gene3D" id="1.10.150.20">
    <property type="entry name" value="5' to 3' exonuclease, C-terminal subdomain"/>
    <property type="match status" value="1"/>
</dbReference>
<dbReference type="Gene3D" id="3.40.1440.10">
    <property type="entry name" value="GIY-YIG endonuclease"/>
    <property type="match status" value="1"/>
</dbReference>
<dbReference type="Gene3D" id="4.10.860.10">
    <property type="entry name" value="UVR domain"/>
    <property type="match status" value="1"/>
</dbReference>
<dbReference type="Gene3D" id="3.30.420.340">
    <property type="entry name" value="UvrC, RNAse H endonuclease domain"/>
    <property type="match status" value="1"/>
</dbReference>
<dbReference type="HAMAP" id="MF_00203">
    <property type="entry name" value="UvrC"/>
    <property type="match status" value="1"/>
</dbReference>
<dbReference type="InterPro" id="IPR000305">
    <property type="entry name" value="GIY-YIG_endonuc"/>
</dbReference>
<dbReference type="InterPro" id="IPR035901">
    <property type="entry name" value="GIY-YIG_endonuc_sf"/>
</dbReference>
<dbReference type="InterPro" id="IPR047296">
    <property type="entry name" value="GIY-YIG_UvrC_Cho"/>
</dbReference>
<dbReference type="InterPro" id="IPR003583">
    <property type="entry name" value="Hlx-hairpin-Hlx_DNA-bd_motif"/>
</dbReference>
<dbReference type="InterPro" id="IPR010994">
    <property type="entry name" value="RuvA_2-like"/>
</dbReference>
<dbReference type="InterPro" id="IPR001943">
    <property type="entry name" value="UVR_dom"/>
</dbReference>
<dbReference type="InterPro" id="IPR036876">
    <property type="entry name" value="UVR_dom_sf"/>
</dbReference>
<dbReference type="InterPro" id="IPR050066">
    <property type="entry name" value="UvrABC_protein_C"/>
</dbReference>
<dbReference type="InterPro" id="IPR004791">
    <property type="entry name" value="UvrC"/>
</dbReference>
<dbReference type="InterPro" id="IPR001162">
    <property type="entry name" value="UvrC_RNase_H_dom"/>
</dbReference>
<dbReference type="InterPro" id="IPR038476">
    <property type="entry name" value="UvrC_RNase_H_dom_sf"/>
</dbReference>
<dbReference type="NCBIfam" id="NF001824">
    <property type="entry name" value="PRK00558.1-5"/>
    <property type="match status" value="1"/>
</dbReference>
<dbReference type="NCBIfam" id="TIGR00194">
    <property type="entry name" value="uvrC"/>
    <property type="match status" value="1"/>
</dbReference>
<dbReference type="PANTHER" id="PTHR30562:SF1">
    <property type="entry name" value="UVRABC SYSTEM PROTEIN C"/>
    <property type="match status" value="1"/>
</dbReference>
<dbReference type="PANTHER" id="PTHR30562">
    <property type="entry name" value="UVRC/OXIDOREDUCTASE"/>
    <property type="match status" value="1"/>
</dbReference>
<dbReference type="Pfam" id="PF01541">
    <property type="entry name" value="GIY-YIG"/>
    <property type="match status" value="1"/>
</dbReference>
<dbReference type="Pfam" id="PF14520">
    <property type="entry name" value="HHH_5"/>
    <property type="match status" value="1"/>
</dbReference>
<dbReference type="Pfam" id="PF02151">
    <property type="entry name" value="UVR"/>
    <property type="match status" value="1"/>
</dbReference>
<dbReference type="Pfam" id="PF22920">
    <property type="entry name" value="UvrC_RNaseH"/>
    <property type="match status" value="1"/>
</dbReference>
<dbReference type="Pfam" id="PF08459">
    <property type="entry name" value="UvrC_RNaseH_dom"/>
    <property type="match status" value="1"/>
</dbReference>
<dbReference type="SMART" id="SM00465">
    <property type="entry name" value="GIYc"/>
    <property type="match status" value="1"/>
</dbReference>
<dbReference type="SMART" id="SM00278">
    <property type="entry name" value="HhH1"/>
    <property type="match status" value="2"/>
</dbReference>
<dbReference type="SUPFAM" id="SSF46600">
    <property type="entry name" value="C-terminal UvrC-binding domain of UvrB"/>
    <property type="match status" value="1"/>
</dbReference>
<dbReference type="SUPFAM" id="SSF82771">
    <property type="entry name" value="GIY-YIG endonuclease"/>
    <property type="match status" value="1"/>
</dbReference>
<dbReference type="SUPFAM" id="SSF47781">
    <property type="entry name" value="RuvA domain 2-like"/>
    <property type="match status" value="1"/>
</dbReference>
<dbReference type="PROSITE" id="PS50164">
    <property type="entry name" value="GIY_YIG"/>
    <property type="match status" value="1"/>
</dbReference>
<dbReference type="PROSITE" id="PS50151">
    <property type="entry name" value="UVR"/>
    <property type="match status" value="1"/>
</dbReference>
<dbReference type="PROSITE" id="PS50165">
    <property type="entry name" value="UVRC"/>
    <property type="match status" value="1"/>
</dbReference>
<gene>
    <name evidence="1" type="primary">uvrC</name>
    <name type="ordered locus">Psyr_2896</name>
</gene>
<feature type="chain" id="PRO_0000138330" description="UvrABC system protein C">
    <location>
        <begin position="1"/>
        <end position="607"/>
    </location>
</feature>
<feature type="domain" description="GIY-YIG" evidence="1">
    <location>
        <begin position="16"/>
        <end position="94"/>
    </location>
</feature>
<feature type="domain" description="UVR" evidence="1">
    <location>
        <begin position="203"/>
        <end position="238"/>
    </location>
</feature>
<feature type="sequence conflict" description="In Ref. 2; AAA65232." evidence="2" ref="2">
    <original>FDPGAFLATCSGRPGVYRMFDA</original>
    <variation>LIQVHSRDCSVPASTVCRR</variation>
    <location>
        <begin position="5"/>
        <end position="26"/>
    </location>
</feature>
<organism>
    <name type="scientific">Pseudomonas syringae pv. syringae (strain B728a)</name>
    <dbReference type="NCBI Taxonomy" id="205918"/>
    <lineage>
        <taxon>Bacteria</taxon>
        <taxon>Pseudomonadati</taxon>
        <taxon>Pseudomonadota</taxon>
        <taxon>Gammaproteobacteria</taxon>
        <taxon>Pseudomonadales</taxon>
        <taxon>Pseudomonadaceae</taxon>
        <taxon>Pseudomonas</taxon>
        <taxon>Pseudomonas syringae</taxon>
    </lineage>
</organism>